<comment type="function">
    <text>The pharmacological activities of caerulein are quite similar to the physiological activities of gastrin and related peptides.</text>
</comment>
<comment type="subcellular location">
    <subcellularLocation>
        <location>Secreted</location>
    </subcellularLocation>
</comment>
<comment type="tissue specificity">
    <text>Expressed by the skin glands.</text>
</comment>
<comment type="similarity">
    <text evidence="3">Belongs to the gastrin/cholecystokinin family.</text>
</comment>
<evidence type="ECO:0000255" key="1"/>
<evidence type="ECO:0000256" key="2">
    <source>
        <dbReference type="SAM" id="MobiDB-lite"/>
    </source>
</evidence>
<evidence type="ECO:0000305" key="3"/>
<dbReference type="EMBL" id="M12493">
    <property type="protein sequence ID" value="AAA49683.1"/>
    <property type="molecule type" value="mRNA"/>
</dbReference>
<dbReference type="PIR" id="B23364">
    <property type="entry name" value="B23364"/>
</dbReference>
<dbReference type="TCDB" id="1.C.16.1.2">
    <property type="family name" value="the magainin (magainin) family"/>
</dbReference>
<dbReference type="AGR" id="Xenbase:XB-GENE-6254459"/>
<dbReference type="Xenbase" id="XB-GENE-6254459">
    <property type="gene designation" value="xt6l.L"/>
</dbReference>
<dbReference type="Proteomes" id="UP000186698">
    <property type="component" value="Unplaced"/>
</dbReference>
<dbReference type="GO" id="GO:0005576">
    <property type="term" value="C:extracellular region"/>
    <property type="evidence" value="ECO:0007669"/>
    <property type="project" value="UniProtKB-SubCell"/>
</dbReference>
<dbReference type="GO" id="GO:0002777">
    <property type="term" value="P:antimicrobial peptide biosynthetic process"/>
    <property type="evidence" value="ECO:0000304"/>
    <property type="project" value="Xenbase"/>
</dbReference>
<dbReference type="GO" id="GO:0045087">
    <property type="term" value="P:innate immune response"/>
    <property type="evidence" value="ECO:0000304"/>
    <property type="project" value="Xenbase"/>
</dbReference>
<protein>
    <recommendedName>
        <fullName>Preprocaerulein type I'</fullName>
    </recommendedName>
</protein>
<feature type="signal peptide" evidence="1">
    <location>
        <begin position="1"/>
        <end position="26"/>
    </location>
</feature>
<feature type="propeptide" id="PRO_0000010496">
    <location>
        <begin position="27"/>
        <end position="136" status="greater than"/>
    </location>
</feature>
<feature type="region of interest" description="Disordered" evidence="2">
    <location>
        <begin position="82"/>
        <end position="101"/>
    </location>
</feature>
<feature type="non-terminal residue">
    <location>
        <position position="136"/>
    </location>
</feature>
<reference key="1">
    <citation type="journal article" date="1986" name="J. Biol. Chem.">
        <title>Sequence of preprocaerulein cDNAs cloned from skin of Xenopus laevis. A small family of precursors containing one, three, or four copies of the final product.</title>
        <authorList>
            <person name="Richter K."/>
            <person name="Egger R."/>
            <person name="Kreil G."/>
        </authorList>
    </citation>
    <scope>NUCLEOTIDE SEQUENCE [MRNA]</scope>
    <source>
        <tissue>Skin</tissue>
    </source>
</reference>
<organism>
    <name type="scientific">Xenopus laevis</name>
    <name type="common">African clawed frog</name>
    <dbReference type="NCBI Taxonomy" id="8355"/>
    <lineage>
        <taxon>Eukaryota</taxon>
        <taxon>Metazoa</taxon>
        <taxon>Chordata</taxon>
        <taxon>Craniata</taxon>
        <taxon>Vertebrata</taxon>
        <taxon>Euteleostomi</taxon>
        <taxon>Amphibia</taxon>
        <taxon>Batrachia</taxon>
        <taxon>Anura</taxon>
        <taxon>Pipoidea</taxon>
        <taxon>Pipidae</taxon>
        <taxon>Xenopodinae</taxon>
        <taxon>Xenopus</taxon>
        <taxon>Xenopus</taxon>
    </lineage>
</organism>
<name>CAER2_XENLA</name>
<keyword id="KW-0878">Amphibian defense peptide</keyword>
<keyword id="KW-0165">Cleavage on pair of basic residues</keyword>
<keyword id="KW-1185">Reference proteome</keyword>
<keyword id="KW-0964">Secreted</keyword>
<keyword id="KW-0732">Signal</keyword>
<sequence length="136" mass="14460">MFKGILLCVLFAVLSANPLSQPEGFADEERDVRGLASFLGKALKAGLKNDDDVNERDVRGFASFLGKALKAALKIGANALGGAPQQREANDERRFADDEDDVNERDVRGFGSFLGKALKAALKIGANALGGAPQQR</sequence>
<accession>P05223</accession>
<proteinExistence type="evidence at transcript level"/>